<protein>
    <recommendedName>
        <fullName>Ubiquitin carboxyl-terminal hydrolase 42</fullName>
        <ecNumber>3.4.19.12</ecNumber>
    </recommendedName>
    <alternativeName>
        <fullName>Deubiquitinating enzyme 42</fullName>
    </alternativeName>
    <alternativeName>
        <fullName>Ubiquitin thioesterase 42</fullName>
    </alternativeName>
    <alternativeName>
        <fullName>Ubiquitin-specific-processing protease 42</fullName>
    </alternativeName>
</protein>
<comment type="function">
    <text evidence="1">Deubiquitinating enzyme which may play an important role during spermatogenesis.</text>
</comment>
<comment type="catalytic activity">
    <reaction evidence="6">
        <text>Thiol-dependent hydrolysis of ester, thioester, amide, peptide and isopeptide bonds formed by the C-terminal Gly of ubiquitin (a 76-residue protein attached to proteins as an intracellular targeting signal).</text>
        <dbReference type="EC" id="3.4.19.12"/>
    </reaction>
</comment>
<comment type="interaction">
    <interactant intactId="EBI-2513638">
        <id>Q9H9J4</id>
    </interactant>
    <interactant intactId="EBI-366083">
        <id>P04637</id>
        <label>TP53</label>
    </interactant>
    <organismsDiffer>false</organismsDiffer>
    <experiments>2</experiments>
</comment>
<comment type="interaction">
    <interactant intactId="EBI-9118105">
        <id>Q9H9J4-2</id>
    </interactant>
    <interactant intactId="EBI-366083">
        <id>P04637</id>
        <label>TP53</label>
    </interactant>
    <organismsDiffer>false</organismsDiffer>
    <experiments>2</experiments>
</comment>
<comment type="alternative products">
    <event type="alternative splicing"/>
    <isoform>
        <id>Q9H9J4-1</id>
        <name>1</name>
        <sequence type="displayed"/>
    </isoform>
    <isoform>
        <id>Q9H9J4-2</id>
        <name>2</name>
        <sequence type="described" ref="VSP_040529"/>
    </isoform>
</comment>
<comment type="tissue specificity">
    <text evidence="6">Broadly expressed.</text>
</comment>
<comment type="similarity">
    <text evidence="8">Belongs to the peptidase C19 family.</text>
</comment>
<sequence>MTIVDKASESSDPSAYQNQPGSSEAVSPGDMDAGSASWGAVSSLNDVSNHTLSLGPVPGAVVYSSSSVPDKSKPSPQKDQALGDGIAPPQKVLFPSEKICLKWQQTHRVGAGLQNLGNTCFANAALQCLTYTPPLANYMLSHEHSKTCHAEGFCMMCTMQAHITQALSNPGDVIKPMFVINEMRRIARHFRFGNQEDAHEFLQYTVDAMQKACLNGSNKLDRHTQATTLVCQIFGGYLRSRVKCLNCKGVSDTFDPYLDITLEIKAAQSVNKALEQFVKPEQLDGENSYKCSKCKKMVPASKRFTIHRSSNVLTLSLKRFANFTGGKIAKDVKYPEYLDIRPYMSQPNGEPIVYVLYAVLVHTGFNCHAGHYFCYIKASNGLWYQMNDSIVSTSDIRSVLSQQAYVLFYIRSHDVKNGGELTHPTHSPGQSSPRPVISQRVVTNKQAAPGFIGPQLPSHMIKNPPHLNGTGPLKDTPSSSMSSPNGNSSVNRASPVNASASVQNWSVNRSSVIPEHPKKQKITISIHNKLPVRQCQSQPNLHSNSLENPTKPVPSSTITNSAVQSTSNASTMSVSSKVTKPIPRSESCSQPVMNGKSKLNSSVLVPYGAESSEDSDEESKGLGKENGIGTIVSSHSPGQDAEDEEATPHELQEPMTLNGANSADSDSDPKENGLAPDGASCQGQPALHSENPFAKANGLPGKLMPAPLLSLPEDKILETFRLSNKLKGSTDEMSAPGAERGPPEDRDAEPQPGSPAAESLEEPDAAAGLSSTKKAPPPRDPGTPATKEGAWEAMAVAPEEPPPSAGEDIVGDTAPPDLCDPGSLTGDASPLSQDAKGMIAEGPRDSALAEAPEGLSPAPPARSEEPCEQPLLVHPSGDHARDAQDPSQSLGAPEAAERPPAPVLDMAPAGHPEGDAEPSPGERVEDAAAPKAPGPSPAKEKIGSLRKVDRGHYRSRRERSSSGEPARESRSKTEGHRHRRRRTCPRERDRQDRHAPEHHPGHGDRLSPGERRSLGRCSHHHSRHRSGVELDWVRHHYTEGERGWGREKFYPDRPRWDRCRYYHDRYALYAARDWKPFHGGREHERAGLHERPHKDHNRGRRGCEPARERERHRPSSPRAGAPHALAPHPDRFSHDRTALVAGDNCNLSDRFHEHENGKSRKRRHDSVENSDSHVEKKARRSEQKDPLEEPKAKKHKKSKKKKKSKDKHRDRDSRHQQDSDLSAACSDADLHRHKKKKKKKKRHSRKSEDFVKDSELHLPRVTSLETVAQFRRAQGGFPLSGGPPLEGVGPFREKTKHLRMESRDDRCRLFEYGQGKRRYLELGR</sequence>
<accession>Q9H9J4</accession>
<accession>A2RUE3</accession>
<accession>B5MDA5</accession>
<accession>Q0VIN8</accession>
<accession>Q3C166</accession>
<accession>Q6P9B4</accession>
<name>UBP42_HUMAN</name>
<organism>
    <name type="scientific">Homo sapiens</name>
    <name type="common">Human</name>
    <dbReference type="NCBI Taxonomy" id="9606"/>
    <lineage>
        <taxon>Eukaryota</taxon>
        <taxon>Metazoa</taxon>
        <taxon>Chordata</taxon>
        <taxon>Craniata</taxon>
        <taxon>Vertebrata</taxon>
        <taxon>Euteleostomi</taxon>
        <taxon>Mammalia</taxon>
        <taxon>Eutheria</taxon>
        <taxon>Euarchontoglires</taxon>
        <taxon>Primates</taxon>
        <taxon>Haplorrhini</taxon>
        <taxon>Catarrhini</taxon>
        <taxon>Hominidae</taxon>
        <taxon>Homo</taxon>
    </lineage>
</organism>
<dbReference type="EC" id="3.4.19.12"/>
<dbReference type="EMBL" id="AJ601395">
    <property type="protein sequence ID" value="CAE53097.1"/>
    <property type="molecule type" value="mRNA"/>
</dbReference>
<dbReference type="EMBL" id="AY618868">
    <property type="protein sequence ID" value="AAT67238.1"/>
    <property type="molecule type" value="mRNA"/>
</dbReference>
<dbReference type="EMBL" id="AC004895">
    <property type="status" value="NOT_ANNOTATED_CDS"/>
    <property type="molecule type" value="Genomic_DNA"/>
</dbReference>
<dbReference type="EMBL" id="BC060846">
    <property type="protein sequence ID" value="AAH60846.2"/>
    <property type="molecule type" value="mRNA"/>
</dbReference>
<dbReference type="EMBL" id="BC132862">
    <property type="protein sequence ID" value="AAI32863.1"/>
    <property type="molecule type" value="mRNA"/>
</dbReference>
<dbReference type="EMBL" id="AK022759">
    <property type="protein sequence ID" value="BAB14232.1"/>
    <property type="molecule type" value="mRNA"/>
</dbReference>
<dbReference type="CCDS" id="CCDS47535.1">
    <molecule id="Q9H9J4-2"/>
</dbReference>
<dbReference type="RefSeq" id="NP_001352693.1">
    <molecule id="Q9H9J4-1"/>
    <property type="nucleotide sequence ID" value="NM_001365764.1"/>
</dbReference>
<dbReference type="RefSeq" id="NP_115548.1">
    <molecule id="Q9H9J4-2"/>
    <property type="nucleotide sequence ID" value="NM_032172.3"/>
</dbReference>
<dbReference type="SMR" id="Q9H9J4"/>
<dbReference type="BioGRID" id="123904">
    <property type="interactions" value="70"/>
</dbReference>
<dbReference type="FunCoup" id="Q9H9J4">
    <property type="interactions" value="4092"/>
</dbReference>
<dbReference type="IntAct" id="Q9H9J4">
    <property type="interactions" value="46"/>
</dbReference>
<dbReference type="MINT" id="Q9H9J4"/>
<dbReference type="STRING" id="9606.ENSP00000301962"/>
<dbReference type="MEROPS" id="C19.048"/>
<dbReference type="GlyGen" id="Q9H9J4">
    <property type="glycosylation" value="2 sites, 1 N-linked glycan (1 site), 1 O-linked glycan (1 site)"/>
</dbReference>
<dbReference type="iPTMnet" id="Q9H9J4"/>
<dbReference type="PhosphoSitePlus" id="Q9H9J4"/>
<dbReference type="BioMuta" id="USP42"/>
<dbReference type="DMDM" id="322510098"/>
<dbReference type="jPOST" id="Q9H9J4"/>
<dbReference type="MassIVE" id="Q9H9J4"/>
<dbReference type="PaxDb" id="9606-ENSP00000301962"/>
<dbReference type="PeptideAtlas" id="Q9H9J4"/>
<dbReference type="ProteomicsDB" id="81325">
    <molecule id="Q9H9J4-1"/>
</dbReference>
<dbReference type="ProteomicsDB" id="81326">
    <molecule id="Q9H9J4-2"/>
</dbReference>
<dbReference type="Pumba" id="Q9H9J4"/>
<dbReference type="Antibodypedia" id="1719">
    <property type="antibodies" value="105 antibodies from 27 providers"/>
</dbReference>
<dbReference type="DNASU" id="84132"/>
<dbReference type="Ensembl" id="ENST00000306177.10">
    <molecule id="Q9H9J4-2"/>
    <property type="protein sequence ID" value="ENSP00000301962.5"/>
    <property type="gene ID" value="ENSG00000106346.12"/>
</dbReference>
<dbReference type="GeneID" id="84132"/>
<dbReference type="KEGG" id="hsa:84132"/>
<dbReference type="MANE-Select" id="ENST00000306177.10">
    <molecule id="Q9H9J4-2"/>
    <property type="protein sequence ID" value="ENSP00000301962.5"/>
    <property type="RefSeq nucleotide sequence ID" value="NM_032172.3"/>
    <property type="RefSeq protein sequence ID" value="NP_115548.1"/>
</dbReference>
<dbReference type="UCSC" id="uc011jwp.3">
    <molecule id="Q9H9J4-1"/>
    <property type="organism name" value="human"/>
</dbReference>
<dbReference type="AGR" id="HGNC:20068"/>
<dbReference type="CTD" id="84132"/>
<dbReference type="DisGeNET" id="84132"/>
<dbReference type="GeneCards" id="USP42"/>
<dbReference type="HGNC" id="HGNC:20068">
    <property type="gene designation" value="USP42"/>
</dbReference>
<dbReference type="HPA" id="ENSG00000106346">
    <property type="expression patterns" value="Low tissue specificity"/>
</dbReference>
<dbReference type="MIM" id="620946">
    <property type="type" value="gene"/>
</dbReference>
<dbReference type="neXtProt" id="NX_Q9H9J4"/>
<dbReference type="OpenTargets" id="ENSG00000106346"/>
<dbReference type="PharmGKB" id="PA134902515"/>
<dbReference type="VEuPathDB" id="HostDB:ENSG00000106346"/>
<dbReference type="eggNOG" id="KOG1865">
    <property type="taxonomic scope" value="Eukaryota"/>
</dbReference>
<dbReference type="GeneTree" id="ENSGT00940000154596"/>
<dbReference type="HOGENOM" id="CLU_005541_1_0_1"/>
<dbReference type="InParanoid" id="Q9H9J4"/>
<dbReference type="OMA" id="YGGRPYK"/>
<dbReference type="OrthoDB" id="420187at2759"/>
<dbReference type="PAN-GO" id="Q9H9J4">
    <property type="GO annotations" value="6 GO annotations based on evolutionary models"/>
</dbReference>
<dbReference type="PhylomeDB" id="Q9H9J4"/>
<dbReference type="TreeFam" id="TF315281"/>
<dbReference type="PathwayCommons" id="Q9H9J4"/>
<dbReference type="Reactome" id="R-HSA-5689880">
    <property type="pathway name" value="Ub-specific processing proteases"/>
</dbReference>
<dbReference type="SignaLink" id="Q9H9J4"/>
<dbReference type="BioGRID-ORCS" id="84132">
    <property type="hits" value="18 hits in 1197 CRISPR screens"/>
</dbReference>
<dbReference type="CD-CODE" id="804901D1">
    <property type="entry name" value="Nuclear speckle"/>
</dbReference>
<dbReference type="ChiTaRS" id="USP42">
    <property type="organism name" value="human"/>
</dbReference>
<dbReference type="GeneWiki" id="USP42"/>
<dbReference type="GenomeRNAi" id="84132"/>
<dbReference type="Pharos" id="Q9H9J4">
    <property type="development level" value="Tbio"/>
</dbReference>
<dbReference type="PRO" id="PR:Q9H9J4"/>
<dbReference type="Proteomes" id="UP000005640">
    <property type="component" value="Chromosome 7"/>
</dbReference>
<dbReference type="RNAct" id="Q9H9J4">
    <property type="molecule type" value="protein"/>
</dbReference>
<dbReference type="Bgee" id="ENSG00000106346">
    <property type="expression patterns" value="Expressed in sperm and 190 other cell types or tissues"/>
</dbReference>
<dbReference type="ExpressionAtlas" id="Q9H9J4">
    <property type="expression patterns" value="baseline and differential"/>
</dbReference>
<dbReference type="GO" id="GO:0005829">
    <property type="term" value="C:cytosol"/>
    <property type="evidence" value="ECO:0000318"/>
    <property type="project" value="GO_Central"/>
</dbReference>
<dbReference type="GO" id="GO:0005654">
    <property type="term" value="C:nucleoplasm"/>
    <property type="evidence" value="ECO:0000304"/>
    <property type="project" value="Reactome"/>
</dbReference>
<dbReference type="GO" id="GO:0005634">
    <property type="term" value="C:nucleus"/>
    <property type="evidence" value="ECO:0000318"/>
    <property type="project" value="GO_Central"/>
</dbReference>
<dbReference type="GO" id="GO:0004843">
    <property type="term" value="F:cysteine-type deubiquitinase activity"/>
    <property type="evidence" value="ECO:0000314"/>
    <property type="project" value="FlyBase"/>
</dbReference>
<dbReference type="GO" id="GO:0030154">
    <property type="term" value="P:cell differentiation"/>
    <property type="evidence" value="ECO:0007669"/>
    <property type="project" value="UniProtKB-KW"/>
</dbReference>
<dbReference type="GO" id="GO:0016579">
    <property type="term" value="P:protein deubiquitination"/>
    <property type="evidence" value="ECO:0000250"/>
    <property type="project" value="UniProtKB"/>
</dbReference>
<dbReference type="GO" id="GO:0006508">
    <property type="term" value="P:proteolysis"/>
    <property type="evidence" value="ECO:0007669"/>
    <property type="project" value="UniProtKB-KW"/>
</dbReference>
<dbReference type="GO" id="GO:0042981">
    <property type="term" value="P:regulation of apoptotic process"/>
    <property type="evidence" value="ECO:0000318"/>
    <property type="project" value="GO_Central"/>
</dbReference>
<dbReference type="GO" id="GO:0031647">
    <property type="term" value="P:regulation of protein stability"/>
    <property type="evidence" value="ECO:0000318"/>
    <property type="project" value="GO_Central"/>
</dbReference>
<dbReference type="GO" id="GO:0007283">
    <property type="term" value="P:spermatogenesis"/>
    <property type="evidence" value="ECO:0007669"/>
    <property type="project" value="UniProtKB-KW"/>
</dbReference>
<dbReference type="CDD" id="cd02661">
    <property type="entry name" value="Peptidase_C19E"/>
    <property type="match status" value="1"/>
</dbReference>
<dbReference type="FunFam" id="3.90.70.10:FF:000016">
    <property type="entry name" value="Ubiquitin carboxyl-terminal hydrolase 36"/>
    <property type="match status" value="1"/>
</dbReference>
<dbReference type="Gene3D" id="3.90.70.10">
    <property type="entry name" value="Cysteine proteinases"/>
    <property type="match status" value="1"/>
</dbReference>
<dbReference type="InterPro" id="IPR038765">
    <property type="entry name" value="Papain-like_cys_pep_sf"/>
</dbReference>
<dbReference type="InterPro" id="IPR050164">
    <property type="entry name" value="Peptidase_C19"/>
</dbReference>
<dbReference type="InterPro" id="IPR001394">
    <property type="entry name" value="Peptidase_C19_UCH"/>
</dbReference>
<dbReference type="InterPro" id="IPR018200">
    <property type="entry name" value="USP_CS"/>
</dbReference>
<dbReference type="InterPro" id="IPR028889">
    <property type="entry name" value="USP_dom"/>
</dbReference>
<dbReference type="PANTHER" id="PTHR24006">
    <property type="entry name" value="UBIQUITIN CARBOXYL-TERMINAL HYDROLASE"/>
    <property type="match status" value="1"/>
</dbReference>
<dbReference type="PANTHER" id="PTHR24006:SF727">
    <property type="entry name" value="UBIQUITIN CARBOXYL-TERMINAL HYDROLASE 42"/>
    <property type="match status" value="1"/>
</dbReference>
<dbReference type="Pfam" id="PF00443">
    <property type="entry name" value="UCH"/>
    <property type="match status" value="1"/>
</dbReference>
<dbReference type="SUPFAM" id="SSF54001">
    <property type="entry name" value="Cysteine proteinases"/>
    <property type="match status" value="1"/>
</dbReference>
<dbReference type="PROSITE" id="PS00972">
    <property type="entry name" value="USP_1"/>
    <property type="match status" value="1"/>
</dbReference>
<dbReference type="PROSITE" id="PS00973">
    <property type="entry name" value="USP_2"/>
    <property type="match status" value="1"/>
</dbReference>
<dbReference type="PROSITE" id="PS50235">
    <property type="entry name" value="USP_3"/>
    <property type="match status" value="1"/>
</dbReference>
<keyword id="KW-0025">Alternative splicing</keyword>
<keyword id="KW-0221">Differentiation</keyword>
<keyword id="KW-0378">Hydrolase</keyword>
<keyword id="KW-0597">Phosphoprotein</keyword>
<keyword id="KW-0645">Protease</keyword>
<keyword id="KW-1267">Proteomics identification</keyword>
<keyword id="KW-1185">Reference proteome</keyword>
<keyword id="KW-0744">Spermatogenesis</keyword>
<keyword id="KW-0788">Thiol protease</keyword>
<keyword id="KW-0833">Ubl conjugation pathway</keyword>
<evidence type="ECO:0000250" key="1"/>
<evidence type="ECO:0000250" key="2">
    <source>
        <dbReference type="UniProtKB" id="B2RQC2"/>
    </source>
</evidence>
<evidence type="ECO:0000255" key="3">
    <source>
        <dbReference type="PROSITE-ProRule" id="PRU10092"/>
    </source>
</evidence>
<evidence type="ECO:0000255" key="4">
    <source>
        <dbReference type="PROSITE-ProRule" id="PRU10093"/>
    </source>
</evidence>
<evidence type="ECO:0000256" key="5">
    <source>
        <dbReference type="SAM" id="MobiDB-lite"/>
    </source>
</evidence>
<evidence type="ECO:0000269" key="6">
    <source>
    </source>
</evidence>
<evidence type="ECO:0000303" key="7">
    <source>
    </source>
</evidence>
<evidence type="ECO:0000305" key="8"/>
<evidence type="ECO:0007744" key="9">
    <source>
    </source>
</evidence>
<evidence type="ECO:0007744" key="10">
    <source>
    </source>
</evidence>
<evidence type="ECO:0007744" key="11">
    <source>
    </source>
</evidence>
<evidence type="ECO:0007744" key="12">
    <source>
    </source>
</evidence>
<evidence type="ECO:0007744" key="13">
    <source>
    </source>
</evidence>
<evidence type="ECO:0007744" key="14">
    <source>
    </source>
</evidence>
<evidence type="ECO:0007744" key="15">
    <source>
    </source>
</evidence>
<feature type="chain" id="PRO_0000080672" description="Ubiquitin carboxyl-terminal hydrolase 42">
    <location>
        <begin position="1"/>
        <end position="1324"/>
    </location>
</feature>
<feature type="domain" description="USP">
    <location>
        <begin position="111"/>
        <end position="412"/>
    </location>
</feature>
<feature type="region of interest" description="Disordered" evidence="5">
    <location>
        <begin position="1"/>
        <end position="38"/>
    </location>
</feature>
<feature type="region of interest" description="Disordered" evidence="5">
    <location>
        <begin position="63"/>
        <end position="87"/>
    </location>
</feature>
<feature type="region of interest" description="Disordered" evidence="5">
    <location>
        <begin position="452"/>
        <end position="494"/>
    </location>
</feature>
<feature type="region of interest" description="Disordered" evidence="5">
    <location>
        <begin position="536"/>
        <end position="707"/>
    </location>
</feature>
<feature type="region of interest" description="Disordered" evidence="5">
    <location>
        <begin position="722"/>
        <end position="1026"/>
    </location>
</feature>
<feature type="region of interest" description="Disordered" evidence="5">
    <location>
        <begin position="1085"/>
        <end position="1131"/>
    </location>
</feature>
<feature type="region of interest" description="Disordered" evidence="5">
    <location>
        <begin position="1149"/>
        <end position="1254"/>
    </location>
</feature>
<feature type="region of interest" description="Disordered" evidence="5">
    <location>
        <begin position="1275"/>
        <end position="1294"/>
    </location>
</feature>
<feature type="compositionally biased region" description="Polar residues" evidence="5">
    <location>
        <begin position="10"/>
        <end position="25"/>
    </location>
</feature>
<feature type="compositionally biased region" description="Low complexity" evidence="5">
    <location>
        <begin position="63"/>
        <end position="80"/>
    </location>
</feature>
<feature type="compositionally biased region" description="Low complexity" evidence="5">
    <location>
        <begin position="477"/>
        <end position="489"/>
    </location>
</feature>
<feature type="compositionally biased region" description="Polar residues" evidence="5">
    <location>
        <begin position="536"/>
        <end position="564"/>
    </location>
</feature>
<feature type="compositionally biased region" description="Low complexity" evidence="5">
    <location>
        <begin position="565"/>
        <end position="576"/>
    </location>
</feature>
<feature type="compositionally biased region" description="Polar residues" evidence="5">
    <location>
        <begin position="586"/>
        <end position="603"/>
    </location>
</feature>
<feature type="compositionally biased region" description="Basic and acidic residues" evidence="5">
    <location>
        <begin position="938"/>
        <end position="974"/>
    </location>
</feature>
<feature type="compositionally biased region" description="Basic and acidic residues" evidence="5">
    <location>
        <begin position="984"/>
        <end position="1013"/>
    </location>
</feature>
<feature type="compositionally biased region" description="Basic and acidic residues" evidence="5">
    <location>
        <begin position="1101"/>
        <end position="1113"/>
    </location>
</feature>
<feature type="compositionally biased region" description="Basic and acidic residues" evidence="5">
    <location>
        <begin position="1149"/>
        <end position="1158"/>
    </location>
</feature>
<feature type="compositionally biased region" description="Basic and acidic residues" evidence="5">
    <location>
        <begin position="1165"/>
        <end position="1191"/>
    </location>
</feature>
<feature type="compositionally biased region" description="Basic residues" evidence="5">
    <location>
        <begin position="1192"/>
        <end position="1206"/>
    </location>
</feature>
<feature type="compositionally biased region" description="Basic and acidic residues" evidence="5">
    <location>
        <begin position="1207"/>
        <end position="1218"/>
    </location>
</feature>
<feature type="compositionally biased region" description="Basic residues" evidence="5">
    <location>
        <begin position="1231"/>
        <end position="1245"/>
    </location>
</feature>
<feature type="active site" description="Nucleophile" evidence="3 4">
    <location>
        <position position="120"/>
    </location>
</feature>
<feature type="active site" description="Proton acceptor" evidence="3 4">
    <location>
        <position position="371"/>
    </location>
</feature>
<feature type="modified residue" description="Phosphoserine" evidence="14">
    <location>
        <position position="75"/>
    </location>
</feature>
<feature type="modified residue" description="Phosphoserine" evidence="14">
    <location>
        <position position="483"/>
    </location>
</feature>
<feature type="modified residue" description="Phosphoserine" evidence="14">
    <location>
        <position position="754"/>
    </location>
</feature>
<feature type="modified residue" description="Phosphoserine" evidence="10 11 12 13 14 15">
    <location>
        <position position="856"/>
    </location>
</feature>
<feature type="modified residue" description="Phosphoserine" evidence="14">
    <location>
        <position position="1181"/>
    </location>
</feature>
<feature type="modified residue" description="Phosphoserine" evidence="2">
    <location>
        <position position="1219"/>
    </location>
</feature>
<feature type="modified residue" description="Phosphoserine" evidence="2">
    <location>
        <position position="1222"/>
    </location>
</feature>
<feature type="modified residue" description="Phosphoserine" evidence="9">
    <location>
        <position position="1226"/>
    </location>
</feature>
<feature type="modified residue" description="Phosphoserine" evidence="14">
    <location>
        <position position="1247"/>
    </location>
</feature>
<feature type="splice variant" id="VSP_040529" description="In isoform 2." evidence="7">
    <original>KRRYLELGR</original>
    <variation>D</variation>
    <location>
        <begin position="1316"/>
        <end position="1324"/>
    </location>
</feature>
<feature type="sequence variant" id="VAR_059754" description="In dbSNP:rs6463529.">
    <original>L</original>
    <variation>P</variation>
    <location>
        <position position="1030"/>
    </location>
</feature>
<feature type="sequence conflict" description="In Ref. 1; CAE53097 and 5; BAB14232." evidence="8" ref="1 5">
    <original>M</original>
    <variation>T</variation>
    <location>
        <position position="655"/>
    </location>
</feature>
<feature type="sequence conflict" description="In Ref. 1; CAE53097." evidence="8" ref="1">
    <original>R</original>
    <variation>RR</variation>
    <location>
        <position position="1214"/>
    </location>
</feature>
<feature type="sequence conflict" description="In Ref. 4; AAT67238." evidence="8" ref="4">
    <original>Q</original>
    <variation>R</variation>
    <location>
        <position position="1217"/>
    </location>
</feature>
<feature type="sequence conflict" description="In Ref. 4; AAT67238." evidence="8" ref="4">
    <original>K</original>
    <variation>E</variation>
    <location>
        <position position="1294"/>
    </location>
</feature>
<proteinExistence type="evidence at protein level"/>
<gene>
    <name type="primary">USP42</name>
</gene>
<reference key="1">
    <citation type="journal article" date="2004" name="Biochem. Biophys. Res. Commun.">
        <title>Cloning and enzymatic analysis of 22 novel human ubiquitin-specific proteases.</title>
        <authorList>
            <person name="Quesada V."/>
            <person name="Diaz-Perales A."/>
            <person name="Gutierrez-Fernandez A."/>
            <person name="Garabaya C."/>
            <person name="Cal S."/>
            <person name="Lopez-Otin C."/>
        </authorList>
    </citation>
    <scope>NUCLEOTIDE SEQUENCE [MRNA] (ISOFORM 1)</scope>
    <scope>TISSUE SPECIFICITY</scope>
    <scope>ENZYME ACTIVITY</scope>
</reference>
<reference key="2">
    <citation type="submission" date="2004-05" db="EMBL/GenBank/DDBJ databases">
        <title>A discovery of a novel deubiquitinating enzyme human USP42.</title>
        <authorList>
            <person name="Baek K.-H."/>
            <person name="Yoo K.-J."/>
        </authorList>
    </citation>
    <scope>NUCLEOTIDE SEQUENCE [MRNA] (ISOFORM 1)</scope>
</reference>
<reference key="3">
    <citation type="journal article" date="2003" name="Nature">
        <title>The DNA sequence of human chromosome 7.</title>
        <authorList>
            <person name="Hillier L.W."/>
            <person name="Fulton R.S."/>
            <person name="Fulton L.A."/>
            <person name="Graves T.A."/>
            <person name="Pepin K.H."/>
            <person name="Wagner-McPherson C."/>
            <person name="Layman D."/>
            <person name="Maas J."/>
            <person name="Jaeger S."/>
            <person name="Walker R."/>
            <person name="Wylie K."/>
            <person name="Sekhon M."/>
            <person name="Becker M.C."/>
            <person name="O'Laughlin M.D."/>
            <person name="Schaller M.E."/>
            <person name="Fewell G.A."/>
            <person name="Delehaunty K.D."/>
            <person name="Miner T.L."/>
            <person name="Nash W.E."/>
            <person name="Cordes M."/>
            <person name="Du H."/>
            <person name="Sun H."/>
            <person name="Edwards J."/>
            <person name="Bradshaw-Cordum H."/>
            <person name="Ali J."/>
            <person name="Andrews S."/>
            <person name="Isak A."/>
            <person name="Vanbrunt A."/>
            <person name="Nguyen C."/>
            <person name="Du F."/>
            <person name="Lamar B."/>
            <person name="Courtney L."/>
            <person name="Kalicki J."/>
            <person name="Ozersky P."/>
            <person name="Bielicki L."/>
            <person name="Scott K."/>
            <person name="Holmes A."/>
            <person name="Harkins R."/>
            <person name="Harris A."/>
            <person name="Strong C.M."/>
            <person name="Hou S."/>
            <person name="Tomlinson C."/>
            <person name="Dauphin-Kohlberg S."/>
            <person name="Kozlowicz-Reilly A."/>
            <person name="Leonard S."/>
            <person name="Rohlfing T."/>
            <person name="Rock S.M."/>
            <person name="Tin-Wollam A.-M."/>
            <person name="Abbott A."/>
            <person name="Minx P."/>
            <person name="Maupin R."/>
            <person name="Strowmatt C."/>
            <person name="Latreille P."/>
            <person name="Miller N."/>
            <person name="Johnson D."/>
            <person name="Murray J."/>
            <person name="Woessner J.P."/>
            <person name="Wendl M.C."/>
            <person name="Yang S.-P."/>
            <person name="Schultz B.R."/>
            <person name="Wallis J.W."/>
            <person name="Spieth J."/>
            <person name="Bieri T.A."/>
            <person name="Nelson J.O."/>
            <person name="Berkowicz N."/>
            <person name="Wohldmann P.E."/>
            <person name="Cook L.L."/>
            <person name="Hickenbotham M.T."/>
            <person name="Eldred J."/>
            <person name="Williams D."/>
            <person name="Bedell J.A."/>
            <person name="Mardis E.R."/>
            <person name="Clifton S.W."/>
            <person name="Chissoe S.L."/>
            <person name="Marra M.A."/>
            <person name="Raymond C."/>
            <person name="Haugen E."/>
            <person name="Gillett W."/>
            <person name="Zhou Y."/>
            <person name="James R."/>
            <person name="Phelps K."/>
            <person name="Iadanoto S."/>
            <person name="Bubb K."/>
            <person name="Simms E."/>
            <person name="Levy R."/>
            <person name="Clendenning J."/>
            <person name="Kaul R."/>
            <person name="Kent W.J."/>
            <person name="Furey T.S."/>
            <person name="Baertsch R.A."/>
            <person name="Brent M.R."/>
            <person name="Keibler E."/>
            <person name="Flicek P."/>
            <person name="Bork P."/>
            <person name="Suyama M."/>
            <person name="Bailey J.A."/>
            <person name="Portnoy M.E."/>
            <person name="Torrents D."/>
            <person name="Chinwalla A.T."/>
            <person name="Gish W.R."/>
            <person name="Eddy S.R."/>
            <person name="McPherson J.D."/>
            <person name="Olson M.V."/>
            <person name="Eichler E.E."/>
            <person name="Green E.D."/>
            <person name="Waterston R.H."/>
            <person name="Wilson R.K."/>
        </authorList>
    </citation>
    <scope>NUCLEOTIDE SEQUENCE [LARGE SCALE GENOMIC DNA]</scope>
</reference>
<reference key="4">
    <citation type="journal article" date="2004" name="Genome Res.">
        <title>The status, quality, and expansion of the NIH full-length cDNA project: the Mammalian Gene Collection (MGC).</title>
        <authorList>
            <consortium name="The MGC Project Team"/>
        </authorList>
    </citation>
    <scope>NUCLEOTIDE SEQUENCE [LARGE SCALE MRNA] (ISOFORM 2)</scope>
    <scope>NUCLEOTIDE SEQUENCE [LARGE SCALE MRNA] OF 1-1202 (ISOFORM 1)</scope>
    <source>
        <tissue>Placenta</tissue>
    </source>
</reference>
<reference key="5">
    <citation type="journal article" date="2004" name="Nat. Genet.">
        <title>Complete sequencing and characterization of 21,243 full-length human cDNAs.</title>
        <authorList>
            <person name="Ota T."/>
            <person name="Suzuki Y."/>
            <person name="Nishikawa T."/>
            <person name="Otsuki T."/>
            <person name="Sugiyama T."/>
            <person name="Irie R."/>
            <person name="Wakamatsu A."/>
            <person name="Hayashi K."/>
            <person name="Sato H."/>
            <person name="Nagai K."/>
            <person name="Kimura K."/>
            <person name="Makita H."/>
            <person name="Sekine M."/>
            <person name="Obayashi M."/>
            <person name="Nishi T."/>
            <person name="Shibahara T."/>
            <person name="Tanaka T."/>
            <person name="Ishii S."/>
            <person name="Yamamoto J."/>
            <person name="Saito K."/>
            <person name="Kawai Y."/>
            <person name="Isono Y."/>
            <person name="Nakamura Y."/>
            <person name="Nagahari K."/>
            <person name="Murakami K."/>
            <person name="Yasuda T."/>
            <person name="Iwayanagi T."/>
            <person name="Wagatsuma M."/>
            <person name="Shiratori A."/>
            <person name="Sudo H."/>
            <person name="Hosoiri T."/>
            <person name="Kaku Y."/>
            <person name="Kodaira H."/>
            <person name="Kondo H."/>
            <person name="Sugawara M."/>
            <person name="Takahashi M."/>
            <person name="Kanda K."/>
            <person name="Yokoi T."/>
            <person name="Furuya T."/>
            <person name="Kikkawa E."/>
            <person name="Omura Y."/>
            <person name="Abe K."/>
            <person name="Kamihara K."/>
            <person name="Katsuta N."/>
            <person name="Sato K."/>
            <person name="Tanikawa M."/>
            <person name="Yamazaki M."/>
            <person name="Ninomiya K."/>
            <person name="Ishibashi T."/>
            <person name="Yamashita H."/>
            <person name="Murakawa K."/>
            <person name="Fujimori K."/>
            <person name="Tanai H."/>
            <person name="Kimata M."/>
            <person name="Watanabe M."/>
            <person name="Hiraoka S."/>
            <person name="Chiba Y."/>
            <person name="Ishida S."/>
            <person name="Ono Y."/>
            <person name="Takiguchi S."/>
            <person name="Watanabe S."/>
            <person name="Yosida M."/>
            <person name="Hotuta T."/>
            <person name="Kusano J."/>
            <person name="Kanehori K."/>
            <person name="Takahashi-Fujii A."/>
            <person name="Hara H."/>
            <person name="Tanase T.-O."/>
            <person name="Nomura Y."/>
            <person name="Togiya S."/>
            <person name="Komai F."/>
            <person name="Hara R."/>
            <person name="Takeuchi K."/>
            <person name="Arita M."/>
            <person name="Imose N."/>
            <person name="Musashino K."/>
            <person name="Yuuki H."/>
            <person name="Oshima A."/>
            <person name="Sasaki N."/>
            <person name="Aotsuka S."/>
            <person name="Yoshikawa Y."/>
            <person name="Matsunawa H."/>
            <person name="Ichihara T."/>
            <person name="Shiohata N."/>
            <person name="Sano S."/>
            <person name="Moriya S."/>
            <person name="Momiyama H."/>
            <person name="Satoh N."/>
            <person name="Takami S."/>
            <person name="Terashima Y."/>
            <person name="Suzuki O."/>
            <person name="Nakagawa S."/>
            <person name="Senoh A."/>
            <person name="Mizoguchi H."/>
            <person name="Goto Y."/>
            <person name="Shimizu F."/>
            <person name="Wakebe H."/>
            <person name="Hishigaki H."/>
            <person name="Watanabe T."/>
            <person name="Sugiyama A."/>
            <person name="Takemoto M."/>
            <person name="Kawakami B."/>
            <person name="Yamazaki M."/>
            <person name="Watanabe K."/>
            <person name="Kumagai A."/>
            <person name="Itakura S."/>
            <person name="Fukuzumi Y."/>
            <person name="Fujimori Y."/>
            <person name="Komiyama M."/>
            <person name="Tashiro H."/>
            <person name="Tanigami A."/>
            <person name="Fujiwara T."/>
            <person name="Ono T."/>
            <person name="Yamada K."/>
            <person name="Fujii Y."/>
            <person name="Ozaki K."/>
            <person name="Hirao M."/>
            <person name="Ohmori Y."/>
            <person name="Kawabata A."/>
            <person name="Hikiji T."/>
            <person name="Kobatake N."/>
            <person name="Inagaki H."/>
            <person name="Ikema Y."/>
            <person name="Okamoto S."/>
            <person name="Okitani R."/>
            <person name="Kawakami T."/>
            <person name="Noguchi S."/>
            <person name="Itoh T."/>
            <person name="Shigeta K."/>
            <person name="Senba T."/>
            <person name="Matsumura K."/>
            <person name="Nakajima Y."/>
            <person name="Mizuno T."/>
            <person name="Morinaga M."/>
            <person name="Sasaki M."/>
            <person name="Togashi T."/>
            <person name="Oyama M."/>
            <person name="Hata H."/>
            <person name="Watanabe M."/>
            <person name="Komatsu T."/>
            <person name="Mizushima-Sugano J."/>
            <person name="Satoh T."/>
            <person name="Shirai Y."/>
            <person name="Takahashi Y."/>
            <person name="Nakagawa K."/>
            <person name="Okumura K."/>
            <person name="Nagase T."/>
            <person name="Nomura N."/>
            <person name="Kikuchi H."/>
            <person name="Masuho Y."/>
            <person name="Yamashita R."/>
            <person name="Nakai K."/>
            <person name="Yada T."/>
            <person name="Nakamura Y."/>
            <person name="Ohara O."/>
            <person name="Isogai T."/>
            <person name="Sugano S."/>
        </authorList>
    </citation>
    <scope>NUCLEOTIDE SEQUENCE [LARGE SCALE MRNA] OF 1-1198</scope>
</reference>
<reference key="6">
    <citation type="journal article" date="2006" name="Cell">
        <title>Global, in vivo, and site-specific phosphorylation dynamics in signaling networks.</title>
        <authorList>
            <person name="Olsen J.V."/>
            <person name="Blagoev B."/>
            <person name="Gnad F."/>
            <person name="Macek B."/>
            <person name="Kumar C."/>
            <person name="Mortensen P."/>
            <person name="Mann M."/>
        </authorList>
    </citation>
    <scope>PHOSPHORYLATION [LARGE SCALE ANALYSIS] AT SER-1226</scope>
    <scope>IDENTIFICATION BY MASS SPECTROMETRY [LARGE SCALE ANALYSIS]</scope>
    <source>
        <tissue>Cervix carcinoma</tissue>
    </source>
</reference>
<reference key="7">
    <citation type="journal article" date="2008" name="Proc. Natl. Acad. Sci. U.S.A.">
        <title>A quantitative atlas of mitotic phosphorylation.</title>
        <authorList>
            <person name="Dephoure N."/>
            <person name="Zhou C."/>
            <person name="Villen J."/>
            <person name="Beausoleil S.A."/>
            <person name="Bakalarski C.E."/>
            <person name="Elledge S.J."/>
            <person name="Gygi S.P."/>
        </authorList>
    </citation>
    <scope>PHOSPHORYLATION [LARGE SCALE ANALYSIS] AT SER-856</scope>
    <scope>IDENTIFICATION BY MASS SPECTROMETRY [LARGE SCALE ANALYSIS]</scope>
    <source>
        <tissue>Cervix carcinoma</tissue>
    </source>
</reference>
<reference key="8">
    <citation type="journal article" date="2009" name="Anal. Chem.">
        <title>Lys-N and trypsin cover complementary parts of the phosphoproteome in a refined SCX-based approach.</title>
        <authorList>
            <person name="Gauci S."/>
            <person name="Helbig A.O."/>
            <person name="Slijper M."/>
            <person name="Krijgsveld J."/>
            <person name="Heck A.J."/>
            <person name="Mohammed S."/>
        </authorList>
    </citation>
    <scope>IDENTIFICATION BY MASS SPECTROMETRY [LARGE SCALE ANALYSIS]</scope>
</reference>
<reference key="9">
    <citation type="journal article" date="2009" name="Sci. Signal.">
        <title>Quantitative phosphoproteomic analysis of T cell receptor signaling reveals system-wide modulation of protein-protein interactions.</title>
        <authorList>
            <person name="Mayya V."/>
            <person name="Lundgren D.H."/>
            <person name="Hwang S.-I."/>
            <person name="Rezaul K."/>
            <person name="Wu L."/>
            <person name="Eng J.K."/>
            <person name="Rodionov V."/>
            <person name="Han D.K."/>
        </authorList>
    </citation>
    <scope>PHOSPHORYLATION [LARGE SCALE ANALYSIS] AT SER-856</scope>
    <scope>IDENTIFICATION BY MASS SPECTROMETRY [LARGE SCALE ANALYSIS]</scope>
    <source>
        <tissue>Leukemic T-cell</tissue>
    </source>
</reference>
<reference key="10">
    <citation type="journal article" date="2010" name="Sci. Signal.">
        <title>Quantitative phosphoproteomics reveals widespread full phosphorylation site occupancy during mitosis.</title>
        <authorList>
            <person name="Olsen J.V."/>
            <person name="Vermeulen M."/>
            <person name="Santamaria A."/>
            <person name="Kumar C."/>
            <person name="Miller M.L."/>
            <person name="Jensen L.J."/>
            <person name="Gnad F."/>
            <person name="Cox J."/>
            <person name="Jensen T.S."/>
            <person name="Nigg E.A."/>
            <person name="Brunak S."/>
            <person name="Mann M."/>
        </authorList>
    </citation>
    <scope>PHOSPHORYLATION [LARGE SCALE ANALYSIS] AT SER-856</scope>
    <scope>IDENTIFICATION BY MASS SPECTROMETRY [LARGE SCALE ANALYSIS]</scope>
    <source>
        <tissue>Cervix carcinoma</tissue>
    </source>
</reference>
<reference key="11">
    <citation type="journal article" date="2011" name="Sci. Signal.">
        <title>System-wide temporal characterization of the proteome and phosphoproteome of human embryonic stem cell differentiation.</title>
        <authorList>
            <person name="Rigbolt K.T."/>
            <person name="Prokhorova T.A."/>
            <person name="Akimov V."/>
            <person name="Henningsen J."/>
            <person name="Johansen P.T."/>
            <person name="Kratchmarova I."/>
            <person name="Kassem M."/>
            <person name="Mann M."/>
            <person name="Olsen J.V."/>
            <person name="Blagoev B."/>
        </authorList>
    </citation>
    <scope>PHOSPHORYLATION [LARGE SCALE ANALYSIS] AT SER-856</scope>
    <scope>IDENTIFICATION BY MASS SPECTROMETRY [LARGE SCALE ANALYSIS]</scope>
</reference>
<reference key="12">
    <citation type="journal article" date="2013" name="J. Proteome Res.">
        <title>Toward a comprehensive characterization of a human cancer cell phosphoproteome.</title>
        <authorList>
            <person name="Zhou H."/>
            <person name="Di Palma S."/>
            <person name="Preisinger C."/>
            <person name="Peng M."/>
            <person name="Polat A.N."/>
            <person name="Heck A.J."/>
            <person name="Mohammed S."/>
        </authorList>
    </citation>
    <scope>PHOSPHORYLATION [LARGE SCALE ANALYSIS] AT SER-75; SER-483; SER-754; SER-856; SER-1181 AND SER-1247</scope>
    <scope>IDENTIFICATION BY MASS SPECTROMETRY [LARGE SCALE ANALYSIS]</scope>
    <source>
        <tissue>Cervix carcinoma</tissue>
        <tissue>Erythroleukemia</tissue>
    </source>
</reference>
<reference key="13">
    <citation type="journal article" date="2014" name="J. Proteomics">
        <title>An enzyme assisted RP-RPLC approach for in-depth analysis of human liver phosphoproteome.</title>
        <authorList>
            <person name="Bian Y."/>
            <person name="Song C."/>
            <person name="Cheng K."/>
            <person name="Dong M."/>
            <person name="Wang F."/>
            <person name="Huang J."/>
            <person name="Sun D."/>
            <person name="Wang L."/>
            <person name="Ye M."/>
            <person name="Zou H."/>
        </authorList>
    </citation>
    <scope>PHOSPHORYLATION [LARGE SCALE ANALYSIS] AT SER-856</scope>
    <scope>IDENTIFICATION BY MASS SPECTROMETRY [LARGE SCALE ANALYSIS]</scope>
    <source>
        <tissue>Liver</tissue>
    </source>
</reference>